<gene>
    <name evidence="1" type="primary">glpK</name>
    <name type="ordered locus">TDE_1916</name>
</gene>
<name>GLPK_TREDE</name>
<feature type="chain" id="PRO_1000020807" description="Glycerol kinase">
    <location>
        <begin position="1"/>
        <end position="496"/>
    </location>
</feature>
<feature type="binding site" evidence="1">
    <location>
        <position position="12"/>
    </location>
    <ligand>
        <name>ADP</name>
        <dbReference type="ChEBI" id="CHEBI:456216"/>
    </ligand>
</feature>
<feature type="binding site" evidence="1">
    <location>
        <position position="12"/>
    </location>
    <ligand>
        <name>ATP</name>
        <dbReference type="ChEBI" id="CHEBI:30616"/>
    </ligand>
</feature>
<feature type="binding site" evidence="1">
    <location>
        <position position="12"/>
    </location>
    <ligand>
        <name>sn-glycerol 3-phosphate</name>
        <dbReference type="ChEBI" id="CHEBI:57597"/>
    </ligand>
</feature>
<feature type="binding site" evidence="1">
    <location>
        <position position="13"/>
    </location>
    <ligand>
        <name>ATP</name>
        <dbReference type="ChEBI" id="CHEBI:30616"/>
    </ligand>
</feature>
<feature type="binding site" evidence="1">
    <location>
        <position position="14"/>
    </location>
    <ligand>
        <name>ATP</name>
        <dbReference type="ChEBI" id="CHEBI:30616"/>
    </ligand>
</feature>
<feature type="binding site" evidence="1">
    <location>
        <position position="16"/>
    </location>
    <ligand>
        <name>ADP</name>
        <dbReference type="ChEBI" id="CHEBI:456216"/>
    </ligand>
</feature>
<feature type="binding site" evidence="1">
    <location>
        <position position="82"/>
    </location>
    <ligand>
        <name>glycerol</name>
        <dbReference type="ChEBI" id="CHEBI:17754"/>
    </ligand>
</feature>
<feature type="binding site" evidence="1">
    <location>
        <position position="82"/>
    </location>
    <ligand>
        <name>sn-glycerol 3-phosphate</name>
        <dbReference type="ChEBI" id="CHEBI:57597"/>
    </ligand>
</feature>
<feature type="binding site" evidence="1">
    <location>
        <position position="83"/>
    </location>
    <ligand>
        <name>glycerol</name>
        <dbReference type="ChEBI" id="CHEBI:17754"/>
    </ligand>
</feature>
<feature type="binding site" evidence="1">
    <location>
        <position position="83"/>
    </location>
    <ligand>
        <name>sn-glycerol 3-phosphate</name>
        <dbReference type="ChEBI" id="CHEBI:57597"/>
    </ligand>
</feature>
<feature type="binding site" evidence="1">
    <location>
        <position position="134"/>
    </location>
    <ligand>
        <name>glycerol</name>
        <dbReference type="ChEBI" id="CHEBI:17754"/>
    </ligand>
</feature>
<feature type="binding site" evidence="1">
    <location>
        <position position="134"/>
    </location>
    <ligand>
        <name>sn-glycerol 3-phosphate</name>
        <dbReference type="ChEBI" id="CHEBI:57597"/>
    </ligand>
</feature>
<feature type="binding site" evidence="1">
    <location>
        <position position="244"/>
    </location>
    <ligand>
        <name>glycerol</name>
        <dbReference type="ChEBI" id="CHEBI:17754"/>
    </ligand>
</feature>
<feature type="binding site" evidence="1">
    <location>
        <position position="244"/>
    </location>
    <ligand>
        <name>sn-glycerol 3-phosphate</name>
        <dbReference type="ChEBI" id="CHEBI:57597"/>
    </ligand>
</feature>
<feature type="binding site" evidence="1">
    <location>
        <position position="245"/>
    </location>
    <ligand>
        <name>glycerol</name>
        <dbReference type="ChEBI" id="CHEBI:17754"/>
    </ligand>
</feature>
<feature type="binding site" evidence="1">
    <location>
        <position position="266"/>
    </location>
    <ligand>
        <name>ADP</name>
        <dbReference type="ChEBI" id="CHEBI:456216"/>
    </ligand>
</feature>
<feature type="binding site" evidence="1">
    <location>
        <position position="266"/>
    </location>
    <ligand>
        <name>ATP</name>
        <dbReference type="ChEBI" id="CHEBI:30616"/>
    </ligand>
</feature>
<feature type="binding site" evidence="1">
    <location>
        <position position="309"/>
    </location>
    <ligand>
        <name>ADP</name>
        <dbReference type="ChEBI" id="CHEBI:456216"/>
    </ligand>
</feature>
<feature type="binding site" evidence="1">
    <location>
        <position position="309"/>
    </location>
    <ligand>
        <name>ATP</name>
        <dbReference type="ChEBI" id="CHEBI:30616"/>
    </ligand>
</feature>
<feature type="binding site" evidence="1">
    <location>
        <position position="313"/>
    </location>
    <ligand>
        <name>ATP</name>
        <dbReference type="ChEBI" id="CHEBI:30616"/>
    </ligand>
</feature>
<feature type="binding site" evidence="1">
    <location>
        <position position="410"/>
    </location>
    <ligand>
        <name>ADP</name>
        <dbReference type="ChEBI" id="CHEBI:456216"/>
    </ligand>
</feature>
<feature type="binding site" evidence="1">
    <location>
        <position position="410"/>
    </location>
    <ligand>
        <name>ATP</name>
        <dbReference type="ChEBI" id="CHEBI:30616"/>
    </ligand>
</feature>
<feature type="binding site" evidence="1">
    <location>
        <position position="414"/>
    </location>
    <ligand>
        <name>ADP</name>
        <dbReference type="ChEBI" id="CHEBI:456216"/>
    </ligand>
</feature>
<organism>
    <name type="scientific">Treponema denticola (strain ATCC 35405 / DSM 14222 / CIP 103919 / JCM 8153 / KCTC 15104)</name>
    <dbReference type="NCBI Taxonomy" id="243275"/>
    <lineage>
        <taxon>Bacteria</taxon>
        <taxon>Pseudomonadati</taxon>
        <taxon>Spirochaetota</taxon>
        <taxon>Spirochaetia</taxon>
        <taxon>Spirochaetales</taxon>
        <taxon>Treponemataceae</taxon>
        <taxon>Treponema</taxon>
    </lineage>
</organism>
<comment type="function">
    <text evidence="1">Key enzyme in the regulation of glycerol uptake and metabolism. Catalyzes the phosphorylation of glycerol to yield sn-glycerol 3-phosphate.</text>
</comment>
<comment type="catalytic activity">
    <reaction evidence="1">
        <text>glycerol + ATP = sn-glycerol 3-phosphate + ADP + H(+)</text>
        <dbReference type="Rhea" id="RHEA:21644"/>
        <dbReference type="ChEBI" id="CHEBI:15378"/>
        <dbReference type="ChEBI" id="CHEBI:17754"/>
        <dbReference type="ChEBI" id="CHEBI:30616"/>
        <dbReference type="ChEBI" id="CHEBI:57597"/>
        <dbReference type="ChEBI" id="CHEBI:456216"/>
        <dbReference type="EC" id="2.7.1.30"/>
    </reaction>
</comment>
<comment type="activity regulation">
    <text evidence="1">Inhibited by fructose 1,6-bisphosphate (FBP).</text>
</comment>
<comment type="pathway">
    <text evidence="1">Polyol metabolism; glycerol degradation via glycerol kinase pathway; sn-glycerol 3-phosphate from glycerol: step 1/1.</text>
</comment>
<comment type="similarity">
    <text evidence="1">Belongs to the FGGY kinase family.</text>
</comment>
<dbReference type="EC" id="2.7.1.30" evidence="1"/>
<dbReference type="EMBL" id="AE017226">
    <property type="protein sequence ID" value="AAS12430.1"/>
    <property type="molecule type" value="Genomic_DNA"/>
</dbReference>
<dbReference type="RefSeq" id="NP_972519.1">
    <property type="nucleotide sequence ID" value="NC_002967.9"/>
</dbReference>
<dbReference type="RefSeq" id="WP_002669730.1">
    <property type="nucleotide sequence ID" value="NC_002967.9"/>
</dbReference>
<dbReference type="SMR" id="Q73LE9"/>
<dbReference type="STRING" id="243275.TDE_1916"/>
<dbReference type="PaxDb" id="243275-TDE_1916"/>
<dbReference type="GeneID" id="2740414"/>
<dbReference type="KEGG" id="tde:TDE_1916"/>
<dbReference type="PATRIC" id="fig|243275.7.peg.1813"/>
<dbReference type="eggNOG" id="COG0554">
    <property type="taxonomic scope" value="Bacteria"/>
</dbReference>
<dbReference type="HOGENOM" id="CLU_009281_2_3_12"/>
<dbReference type="OrthoDB" id="9805576at2"/>
<dbReference type="UniPathway" id="UPA00618">
    <property type="reaction ID" value="UER00672"/>
</dbReference>
<dbReference type="Proteomes" id="UP000008212">
    <property type="component" value="Chromosome"/>
</dbReference>
<dbReference type="GO" id="GO:0005829">
    <property type="term" value="C:cytosol"/>
    <property type="evidence" value="ECO:0007669"/>
    <property type="project" value="TreeGrafter"/>
</dbReference>
<dbReference type="GO" id="GO:0005524">
    <property type="term" value="F:ATP binding"/>
    <property type="evidence" value="ECO:0007669"/>
    <property type="project" value="UniProtKB-UniRule"/>
</dbReference>
<dbReference type="GO" id="GO:0004370">
    <property type="term" value="F:glycerol kinase activity"/>
    <property type="evidence" value="ECO:0000250"/>
    <property type="project" value="UniProtKB"/>
</dbReference>
<dbReference type="GO" id="GO:0019563">
    <property type="term" value="P:glycerol catabolic process"/>
    <property type="evidence" value="ECO:0007669"/>
    <property type="project" value="UniProtKB-UniRule"/>
</dbReference>
<dbReference type="GO" id="GO:0006071">
    <property type="term" value="P:glycerol metabolic process"/>
    <property type="evidence" value="ECO:0000250"/>
    <property type="project" value="UniProtKB"/>
</dbReference>
<dbReference type="GO" id="GO:0006072">
    <property type="term" value="P:glycerol-3-phosphate metabolic process"/>
    <property type="evidence" value="ECO:0007669"/>
    <property type="project" value="InterPro"/>
</dbReference>
<dbReference type="CDD" id="cd07786">
    <property type="entry name" value="FGGY_EcGK_like"/>
    <property type="match status" value="1"/>
</dbReference>
<dbReference type="FunFam" id="3.30.420.40:FF:000007">
    <property type="entry name" value="Glycerol kinase"/>
    <property type="match status" value="1"/>
</dbReference>
<dbReference type="FunFam" id="3.30.420.40:FF:000008">
    <property type="entry name" value="Glycerol kinase"/>
    <property type="match status" value="1"/>
</dbReference>
<dbReference type="Gene3D" id="3.30.420.40">
    <property type="match status" value="2"/>
</dbReference>
<dbReference type="HAMAP" id="MF_00186">
    <property type="entry name" value="Glycerol_kin"/>
    <property type="match status" value="1"/>
</dbReference>
<dbReference type="InterPro" id="IPR043129">
    <property type="entry name" value="ATPase_NBD"/>
</dbReference>
<dbReference type="InterPro" id="IPR000577">
    <property type="entry name" value="Carb_kinase_FGGY"/>
</dbReference>
<dbReference type="InterPro" id="IPR018483">
    <property type="entry name" value="Carb_kinase_FGGY_CS"/>
</dbReference>
<dbReference type="InterPro" id="IPR018485">
    <property type="entry name" value="FGGY_C"/>
</dbReference>
<dbReference type="InterPro" id="IPR018484">
    <property type="entry name" value="FGGY_N"/>
</dbReference>
<dbReference type="InterPro" id="IPR005999">
    <property type="entry name" value="Glycerol_kin"/>
</dbReference>
<dbReference type="NCBIfam" id="TIGR01311">
    <property type="entry name" value="glycerol_kin"/>
    <property type="match status" value="1"/>
</dbReference>
<dbReference type="NCBIfam" id="NF000756">
    <property type="entry name" value="PRK00047.1"/>
    <property type="match status" value="1"/>
</dbReference>
<dbReference type="PANTHER" id="PTHR10196:SF69">
    <property type="entry name" value="GLYCEROL KINASE"/>
    <property type="match status" value="1"/>
</dbReference>
<dbReference type="PANTHER" id="PTHR10196">
    <property type="entry name" value="SUGAR KINASE"/>
    <property type="match status" value="1"/>
</dbReference>
<dbReference type="Pfam" id="PF02782">
    <property type="entry name" value="FGGY_C"/>
    <property type="match status" value="1"/>
</dbReference>
<dbReference type="Pfam" id="PF00370">
    <property type="entry name" value="FGGY_N"/>
    <property type="match status" value="1"/>
</dbReference>
<dbReference type="PIRSF" id="PIRSF000538">
    <property type="entry name" value="GlpK"/>
    <property type="match status" value="1"/>
</dbReference>
<dbReference type="SUPFAM" id="SSF53067">
    <property type="entry name" value="Actin-like ATPase domain"/>
    <property type="match status" value="2"/>
</dbReference>
<dbReference type="PROSITE" id="PS00933">
    <property type="entry name" value="FGGY_KINASES_1"/>
    <property type="match status" value="1"/>
</dbReference>
<dbReference type="PROSITE" id="PS00445">
    <property type="entry name" value="FGGY_KINASES_2"/>
    <property type="match status" value="1"/>
</dbReference>
<sequence>MKKYVLAFDQGTTSCRAILFDKDGKKIETAQQEFSQIFPKQGWVEHDAMEIWGKQSGVAREVLERSGVSTQEIAAIGITNQRETTVVWNKNTGRPVCNAIVWQCRRTADICDALKEKGLSDSIRKKTGLIIDAYFSGTKIKWILDNVPEARTLAEKGELLFGNIDTWLIWNLTRGKVHVTDYTNASRTLLFNIHTLQWDKELLKAMDIPESMLPEVKPSSYVYGYTEEHTFGGSKIPIAGAAGDQQAALFGQACFEEGSAKNTYGTGCFMLMNTGDKIIESENGLLTTIAFGIDNSVKYALEGSSFIAGAAVQWLRDELKLIYTAHETEYYAGLVNDTNGVYFVPAFSGLGAPYWDMYARGALLGLTRGAKREHIVRAVLEAIAYQTKDVLYAMEKDSKINLKSLKVDGGACANNFLMQFQSDILNVPVLRPYEKETTALGAAYLAGLAVGFWKEQGEIKRIQDIEREFRPDMEEEKRKTLYAGWKKAVERSMKWA</sequence>
<keyword id="KW-0067">ATP-binding</keyword>
<keyword id="KW-0319">Glycerol metabolism</keyword>
<keyword id="KW-0418">Kinase</keyword>
<keyword id="KW-0547">Nucleotide-binding</keyword>
<keyword id="KW-1185">Reference proteome</keyword>
<keyword id="KW-0808">Transferase</keyword>
<protein>
    <recommendedName>
        <fullName evidence="1">Glycerol kinase</fullName>
        <ecNumber evidence="1">2.7.1.30</ecNumber>
    </recommendedName>
    <alternativeName>
        <fullName evidence="1">ATP:glycerol 3-phosphotransferase</fullName>
    </alternativeName>
    <alternativeName>
        <fullName evidence="1">Glycerokinase</fullName>
        <shortName evidence="1">GK</shortName>
    </alternativeName>
</protein>
<proteinExistence type="inferred from homology"/>
<reference key="1">
    <citation type="journal article" date="2004" name="Proc. Natl. Acad. Sci. U.S.A.">
        <title>Comparison of the genome of the oral pathogen Treponema denticola with other spirochete genomes.</title>
        <authorList>
            <person name="Seshadri R."/>
            <person name="Myers G.S.A."/>
            <person name="Tettelin H."/>
            <person name="Eisen J.A."/>
            <person name="Heidelberg J.F."/>
            <person name="Dodson R.J."/>
            <person name="Davidsen T.M."/>
            <person name="DeBoy R.T."/>
            <person name="Fouts D.E."/>
            <person name="Haft D.H."/>
            <person name="Selengut J."/>
            <person name="Ren Q."/>
            <person name="Brinkac L.M."/>
            <person name="Madupu R."/>
            <person name="Kolonay J.F."/>
            <person name="Durkin S.A."/>
            <person name="Daugherty S.C."/>
            <person name="Shetty J."/>
            <person name="Shvartsbeyn A."/>
            <person name="Gebregeorgis E."/>
            <person name="Geer K."/>
            <person name="Tsegaye G."/>
            <person name="Malek J.A."/>
            <person name="Ayodeji B."/>
            <person name="Shatsman S."/>
            <person name="McLeod M.P."/>
            <person name="Smajs D."/>
            <person name="Howell J.K."/>
            <person name="Pal S."/>
            <person name="Amin A."/>
            <person name="Vashisth P."/>
            <person name="McNeill T.Z."/>
            <person name="Xiang Q."/>
            <person name="Sodergren E."/>
            <person name="Baca E."/>
            <person name="Weinstock G.M."/>
            <person name="Norris S.J."/>
            <person name="Fraser C.M."/>
            <person name="Paulsen I.T."/>
        </authorList>
    </citation>
    <scope>NUCLEOTIDE SEQUENCE [LARGE SCALE GENOMIC DNA]</scope>
    <source>
        <strain>ATCC 35405 / DSM 14222 / CIP 103919 / JCM 8153 / KCTC 15104</strain>
    </source>
</reference>
<evidence type="ECO:0000255" key="1">
    <source>
        <dbReference type="HAMAP-Rule" id="MF_00186"/>
    </source>
</evidence>
<accession>Q73LE9</accession>